<feature type="chain" id="PRO_1000008089" description="DNA mismatch repair protein MutS">
    <location>
        <begin position="1"/>
        <end position="908"/>
    </location>
</feature>
<feature type="region of interest" description="Disordered" evidence="2">
    <location>
        <begin position="822"/>
        <end position="863"/>
    </location>
</feature>
<feature type="binding site" evidence="1">
    <location>
        <begin position="629"/>
        <end position="636"/>
    </location>
    <ligand>
        <name>ATP</name>
        <dbReference type="ChEBI" id="CHEBI:30616"/>
    </ligand>
</feature>
<protein>
    <recommendedName>
        <fullName evidence="1">DNA mismatch repair protein MutS</fullName>
    </recommendedName>
</protein>
<proteinExistence type="inferred from homology"/>
<accession>Q2S254</accession>
<gene>
    <name evidence="1" type="primary">mutS</name>
    <name type="ordered locus">SRU_1606</name>
</gene>
<comment type="function">
    <text evidence="1">This protein is involved in the repair of mismatches in DNA. It is possible that it carries out the mismatch recognition step. This protein has a weak ATPase activity.</text>
</comment>
<comment type="similarity">
    <text evidence="1">Belongs to the DNA mismatch repair MutS family.</text>
</comment>
<organism>
    <name type="scientific">Salinibacter ruber (strain DSM 13855 / M31)</name>
    <dbReference type="NCBI Taxonomy" id="309807"/>
    <lineage>
        <taxon>Bacteria</taxon>
        <taxon>Pseudomonadati</taxon>
        <taxon>Rhodothermota</taxon>
        <taxon>Rhodothermia</taxon>
        <taxon>Rhodothermales</taxon>
        <taxon>Salinibacteraceae</taxon>
        <taxon>Salinibacter</taxon>
    </lineage>
</organism>
<evidence type="ECO:0000255" key="1">
    <source>
        <dbReference type="HAMAP-Rule" id="MF_00096"/>
    </source>
</evidence>
<evidence type="ECO:0000256" key="2">
    <source>
        <dbReference type="SAM" id="MobiDB-lite"/>
    </source>
</evidence>
<dbReference type="EMBL" id="CP000159">
    <property type="protein sequence ID" value="ABC45289.1"/>
    <property type="molecule type" value="Genomic_DNA"/>
</dbReference>
<dbReference type="RefSeq" id="WP_011404353.1">
    <property type="nucleotide sequence ID" value="NC_007677.1"/>
</dbReference>
<dbReference type="RefSeq" id="YP_445727.1">
    <property type="nucleotide sequence ID" value="NC_007677.1"/>
</dbReference>
<dbReference type="SMR" id="Q2S254"/>
<dbReference type="STRING" id="309807.SRU_1606"/>
<dbReference type="EnsemblBacteria" id="ABC45289">
    <property type="protein sequence ID" value="ABC45289"/>
    <property type="gene ID" value="SRU_1606"/>
</dbReference>
<dbReference type="GeneID" id="83728523"/>
<dbReference type="KEGG" id="sru:SRU_1606"/>
<dbReference type="PATRIC" id="fig|309807.25.peg.1667"/>
<dbReference type="eggNOG" id="COG0249">
    <property type="taxonomic scope" value="Bacteria"/>
</dbReference>
<dbReference type="HOGENOM" id="CLU_002472_3_1_10"/>
<dbReference type="OrthoDB" id="9802448at2"/>
<dbReference type="Proteomes" id="UP000008674">
    <property type="component" value="Chromosome"/>
</dbReference>
<dbReference type="GO" id="GO:0005829">
    <property type="term" value="C:cytosol"/>
    <property type="evidence" value="ECO:0007669"/>
    <property type="project" value="TreeGrafter"/>
</dbReference>
<dbReference type="GO" id="GO:0005524">
    <property type="term" value="F:ATP binding"/>
    <property type="evidence" value="ECO:0007669"/>
    <property type="project" value="UniProtKB-UniRule"/>
</dbReference>
<dbReference type="GO" id="GO:0140664">
    <property type="term" value="F:ATP-dependent DNA damage sensor activity"/>
    <property type="evidence" value="ECO:0007669"/>
    <property type="project" value="InterPro"/>
</dbReference>
<dbReference type="GO" id="GO:0003684">
    <property type="term" value="F:damaged DNA binding"/>
    <property type="evidence" value="ECO:0007669"/>
    <property type="project" value="UniProtKB-UniRule"/>
</dbReference>
<dbReference type="GO" id="GO:0030983">
    <property type="term" value="F:mismatched DNA binding"/>
    <property type="evidence" value="ECO:0007669"/>
    <property type="project" value="InterPro"/>
</dbReference>
<dbReference type="GO" id="GO:0006298">
    <property type="term" value="P:mismatch repair"/>
    <property type="evidence" value="ECO:0007669"/>
    <property type="project" value="UniProtKB-UniRule"/>
</dbReference>
<dbReference type="CDD" id="cd03284">
    <property type="entry name" value="ABC_MutS1"/>
    <property type="match status" value="1"/>
</dbReference>
<dbReference type="FunFam" id="1.10.1420.10:FF:000001">
    <property type="entry name" value="DNA mismatch repair protein MutS"/>
    <property type="match status" value="1"/>
</dbReference>
<dbReference type="FunFam" id="3.40.50.300:FF:000870">
    <property type="entry name" value="MutS protein homolog 4"/>
    <property type="match status" value="1"/>
</dbReference>
<dbReference type="Gene3D" id="1.10.1420.10">
    <property type="match status" value="2"/>
</dbReference>
<dbReference type="Gene3D" id="3.40.1170.10">
    <property type="entry name" value="DNA repair protein MutS, domain I"/>
    <property type="match status" value="1"/>
</dbReference>
<dbReference type="Gene3D" id="3.30.420.110">
    <property type="entry name" value="MutS, connector domain"/>
    <property type="match status" value="1"/>
</dbReference>
<dbReference type="Gene3D" id="3.40.50.300">
    <property type="entry name" value="P-loop containing nucleotide triphosphate hydrolases"/>
    <property type="match status" value="1"/>
</dbReference>
<dbReference type="HAMAP" id="MF_00096">
    <property type="entry name" value="MutS"/>
    <property type="match status" value="1"/>
</dbReference>
<dbReference type="InterPro" id="IPR005748">
    <property type="entry name" value="DNA_mismatch_repair_MutS"/>
</dbReference>
<dbReference type="InterPro" id="IPR007695">
    <property type="entry name" value="DNA_mismatch_repair_MutS-lik_N"/>
</dbReference>
<dbReference type="InterPro" id="IPR017261">
    <property type="entry name" value="DNA_mismatch_repair_MutS/MSH"/>
</dbReference>
<dbReference type="InterPro" id="IPR000432">
    <property type="entry name" value="DNA_mismatch_repair_MutS_C"/>
</dbReference>
<dbReference type="InterPro" id="IPR007861">
    <property type="entry name" value="DNA_mismatch_repair_MutS_clamp"/>
</dbReference>
<dbReference type="InterPro" id="IPR007696">
    <property type="entry name" value="DNA_mismatch_repair_MutS_core"/>
</dbReference>
<dbReference type="InterPro" id="IPR016151">
    <property type="entry name" value="DNA_mismatch_repair_MutS_N"/>
</dbReference>
<dbReference type="InterPro" id="IPR036187">
    <property type="entry name" value="DNA_mismatch_repair_MutS_sf"/>
</dbReference>
<dbReference type="InterPro" id="IPR007860">
    <property type="entry name" value="DNA_mmatch_repair_MutS_con_dom"/>
</dbReference>
<dbReference type="InterPro" id="IPR045076">
    <property type="entry name" value="MutS"/>
</dbReference>
<dbReference type="InterPro" id="IPR036678">
    <property type="entry name" value="MutS_con_dom_sf"/>
</dbReference>
<dbReference type="InterPro" id="IPR027417">
    <property type="entry name" value="P-loop_NTPase"/>
</dbReference>
<dbReference type="NCBIfam" id="TIGR01070">
    <property type="entry name" value="mutS1"/>
    <property type="match status" value="1"/>
</dbReference>
<dbReference type="NCBIfam" id="NF003810">
    <property type="entry name" value="PRK05399.1"/>
    <property type="match status" value="1"/>
</dbReference>
<dbReference type="PANTHER" id="PTHR11361:SF34">
    <property type="entry name" value="DNA MISMATCH REPAIR PROTEIN MSH1, MITOCHONDRIAL"/>
    <property type="match status" value="1"/>
</dbReference>
<dbReference type="PANTHER" id="PTHR11361">
    <property type="entry name" value="DNA MISMATCH REPAIR PROTEIN MUTS FAMILY MEMBER"/>
    <property type="match status" value="1"/>
</dbReference>
<dbReference type="Pfam" id="PF01624">
    <property type="entry name" value="MutS_I"/>
    <property type="match status" value="1"/>
</dbReference>
<dbReference type="Pfam" id="PF05188">
    <property type="entry name" value="MutS_II"/>
    <property type="match status" value="1"/>
</dbReference>
<dbReference type="Pfam" id="PF05192">
    <property type="entry name" value="MutS_III"/>
    <property type="match status" value="1"/>
</dbReference>
<dbReference type="Pfam" id="PF05190">
    <property type="entry name" value="MutS_IV"/>
    <property type="match status" value="1"/>
</dbReference>
<dbReference type="Pfam" id="PF00488">
    <property type="entry name" value="MutS_V"/>
    <property type="match status" value="1"/>
</dbReference>
<dbReference type="PIRSF" id="PIRSF037677">
    <property type="entry name" value="DNA_mis_repair_Msh6"/>
    <property type="match status" value="1"/>
</dbReference>
<dbReference type="SMART" id="SM00534">
    <property type="entry name" value="MUTSac"/>
    <property type="match status" value="1"/>
</dbReference>
<dbReference type="SMART" id="SM00533">
    <property type="entry name" value="MUTSd"/>
    <property type="match status" value="1"/>
</dbReference>
<dbReference type="SUPFAM" id="SSF55271">
    <property type="entry name" value="DNA repair protein MutS, domain I"/>
    <property type="match status" value="1"/>
</dbReference>
<dbReference type="SUPFAM" id="SSF53150">
    <property type="entry name" value="DNA repair protein MutS, domain II"/>
    <property type="match status" value="1"/>
</dbReference>
<dbReference type="SUPFAM" id="SSF48334">
    <property type="entry name" value="DNA repair protein MutS, domain III"/>
    <property type="match status" value="1"/>
</dbReference>
<dbReference type="SUPFAM" id="SSF52540">
    <property type="entry name" value="P-loop containing nucleoside triphosphate hydrolases"/>
    <property type="match status" value="1"/>
</dbReference>
<dbReference type="PROSITE" id="PS00486">
    <property type="entry name" value="DNA_MISMATCH_REPAIR_2"/>
    <property type="match status" value="1"/>
</dbReference>
<keyword id="KW-0067">ATP-binding</keyword>
<keyword id="KW-0227">DNA damage</keyword>
<keyword id="KW-0234">DNA repair</keyword>
<keyword id="KW-0238">DNA-binding</keyword>
<keyword id="KW-0547">Nucleotide-binding</keyword>
<keyword id="KW-1185">Reference proteome</keyword>
<sequence>MAQSSTQQRGRTPLMRQYYKIKERHPKAILLFRMGDFYESFDDDAKTVSRLLGITLTERNNGDADDVPMAGFPHHALDSHLPKLIRSGLRVAICEQVEDADDSSGKVVDRDVVEVVTPGVSFHDQLLNPKQSNFLAALHFGTGRDKDRIGFSFIDATTGEFSVTEAGLDQLQDLIQTVAPSEVIVDKRKTERLQQHLREVPFTVTEQEDWVFKYDFAYQTLLEHFETHSLKGFGVDDMDLGVVASGAALHYLGETQKGALPHVRKIKRYSKDEHIALDPETKRNLELVQSIQDDGHEGTLVSILDETETPMGGRRLRAWLVRPLRDVGRIRHRLDAVEACVDDRTLRDDLREELNQMGDLERLAGKVATGRAAPGDLIAIKHTLRRLPNVLGLLTDADSDALGAIEDDLRSCPEMVDRIQSALVDDPPAKISEGGLIRDGYSEELDELRTIAQEGKDWVANLETEESERTDIPSLKVGFNKVFGYYIEVTNTHADKVPEDYIRKQTLVDSERYVTPELKEMEEKILTAEEKIETLEQELFNELRSQIAQQTGILQENAELLAHLDCFAGLAEVAEQHDYTRPSVDDGLTIDIEEGRHPVVEQTLPPGDPFIPNDMALDPDDEQVLIITGPNMAGKSVALRQVGLIVLLAQVGSFVPAEAAQIGVVDRIFTRVGASDNLAAGESTFLVEMNEAANILNNATARSLILFDEVGRGTSTFDGLSIAWAIVEYLHERPEVAARTLFATHYHELNAMADRLERVHNYRIQVSEHEGEIVFLRKLIPGGADHSYGIEVAKMAGLPDAVIARAREVLQNLESQHLEVGADEADGAPSEDPPSEDPPSGDGVRAKKGEADAVPDLEDSQANQMHLFGQPDPAAEEIKEMLGEIDPNRITPVEALMKLAEMKETLAD</sequence>
<reference key="1">
    <citation type="journal article" date="2005" name="Proc. Natl. Acad. Sci. U.S.A.">
        <title>The genome of Salinibacter ruber: convergence and gene exchange among hyperhalophilic bacteria and archaea.</title>
        <authorList>
            <person name="Mongodin E.F."/>
            <person name="Nelson K.E."/>
            <person name="Daugherty S."/>
            <person name="DeBoy R.T."/>
            <person name="Wister J."/>
            <person name="Khouri H."/>
            <person name="Weidman J."/>
            <person name="Walsh D.A."/>
            <person name="Papke R.T."/>
            <person name="Sanchez Perez G."/>
            <person name="Sharma A.K."/>
            <person name="Nesbo C.L."/>
            <person name="MacLeod D."/>
            <person name="Bapteste E."/>
            <person name="Doolittle W.F."/>
            <person name="Charlebois R.L."/>
            <person name="Legault B."/>
            <person name="Rodriguez-Valera F."/>
        </authorList>
    </citation>
    <scope>NUCLEOTIDE SEQUENCE [LARGE SCALE GENOMIC DNA]</scope>
    <source>
        <strain>DSM 13855 / CECT 5946 / M31</strain>
    </source>
</reference>
<name>MUTS_SALRD</name>